<proteinExistence type="inferred from homology"/>
<dbReference type="EMBL" id="BA000017">
    <property type="protein sequence ID" value="BAB57654.1"/>
    <property type="molecule type" value="Genomic_DNA"/>
</dbReference>
<dbReference type="RefSeq" id="WP_000064078.1">
    <property type="nucleotide sequence ID" value="NC_002758.2"/>
</dbReference>
<dbReference type="SMR" id="Q7A2R6"/>
<dbReference type="GeneID" id="98345856"/>
<dbReference type="KEGG" id="sav:SAV1492"/>
<dbReference type="HOGENOM" id="CLU_000445_30_4_9"/>
<dbReference type="PhylomeDB" id="Q7A2R6"/>
<dbReference type="Proteomes" id="UP000002481">
    <property type="component" value="Chromosome"/>
</dbReference>
<dbReference type="GO" id="GO:0005829">
    <property type="term" value="C:cytosol"/>
    <property type="evidence" value="ECO:0007669"/>
    <property type="project" value="TreeGrafter"/>
</dbReference>
<dbReference type="GO" id="GO:0032993">
    <property type="term" value="C:protein-DNA complex"/>
    <property type="evidence" value="ECO:0007669"/>
    <property type="project" value="TreeGrafter"/>
</dbReference>
<dbReference type="GO" id="GO:0000156">
    <property type="term" value="F:phosphorelay response regulator activity"/>
    <property type="evidence" value="ECO:0007669"/>
    <property type="project" value="TreeGrafter"/>
</dbReference>
<dbReference type="GO" id="GO:0000976">
    <property type="term" value="F:transcription cis-regulatory region binding"/>
    <property type="evidence" value="ECO:0007669"/>
    <property type="project" value="TreeGrafter"/>
</dbReference>
<dbReference type="GO" id="GO:0006355">
    <property type="term" value="P:regulation of DNA-templated transcription"/>
    <property type="evidence" value="ECO:0007669"/>
    <property type="project" value="InterPro"/>
</dbReference>
<dbReference type="CDD" id="cd17574">
    <property type="entry name" value="REC_OmpR"/>
    <property type="match status" value="1"/>
</dbReference>
<dbReference type="CDD" id="cd00383">
    <property type="entry name" value="trans_reg_C"/>
    <property type="match status" value="1"/>
</dbReference>
<dbReference type="FunFam" id="3.40.50.2300:FF:000001">
    <property type="entry name" value="DNA-binding response regulator PhoB"/>
    <property type="match status" value="1"/>
</dbReference>
<dbReference type="FunFam" id="1.10.10.10:FF:000018">
    <property type="entry name" value="DNA-binding response regulator ResD"/>
    <property type="match status" value="1"/>
</dbReference>
<dbReference type="Gene3D" id="3.40.50.2300">
    <property type="match status" value="1"/>
</dbReference>
<dbReference type="Gene3D" id="6.10.250.690">
    <property type="match status" value="1"/>
</dbReference>
<dbReference type="Gene3D" id="1.10.10.10">
    <property type="entry name" value="Winged helix-like DNA-binding domain superfamily/Winged helix DNA-binding domain"/>
    <property type="match status" value="1"/>
</dbReference>
<dbReference type="InterPro" id="IPR011006">
    <property type="entry name" value="CheY-like_superfamily"/>
</dbReference>
<dbReference type="InterPro" id="IPR001867">
    <property type="entry name" value="OmpR/PhoB-type_DNA-bd"/>
</dbReference>
<dbReference type="InterPro" id="IPR001789">
    <property type="entry name" value="Sig_transdc_resp-reg_receiver"/>
</dbReference>
<dbReference type="InterPro" id="IPR039420">
    <property type="entry name" value="WalR-like"/>
</dbReference>
<dbReference type="InterPro" id="IPR036388">
    <property type="entry name" value="WH-like_DNA-bd_sf"/>
</dbReference>
<dbReference type="PANTHER" id="PTHR48111">
    <property type="entry name" value="REGULATOR OF RPOS"/>
    <property type="match status" value="1"/>
</dbReference>
<dbReference type="PANTHER" id="PTHR48111:SF44">
    <property type="entry name" value="TRANSCRIPTIONAL REGULATORY PROTEIN RESD"/>
    <property type="match status" value="1"/>
</dbReference>
<dbReference type="Pfam" id="PF00072">
    <property type="entry name" value="Response_reg"/>
    <property type="match status" value="1"/>
</dbReference>
<dbReference type="Pfam" id="PF00486">
    <property type="entry name" value="Trans_reg_C"/>
    <property type="match status" value="1"/>
</dbReference>
<dbReference type="SMART" id="SM00448">
    <property type="entry name" value="REC"/>
    <property type="match status" value="1"/>
</dbReference>
<dbReference type="SMART" id="SM00862">
    <property type="entry name" value="Trans_reg_C"/>
    <property type="match status" value="1"/>
</dbReference>
<dbReference type="SUPFAM" id="SSF52172">
    <property type="entry name" value="CheY-like"/>
    <property type="match status" value="1"/>
</dbReference>
<dbReference type="PROSITE" id="PS51755">
    <property type="entry name" value="OMPR_PHOB"/>
    <property type="match status" value="1"/>
</dbReference>
<dbReference type="PROSITE" id="PS50110">
    <property type="entry name" value="RESPONSE_REGULATORY"/>
    <property type="match status" value="1"/>
</dbReference>
<gene>
    <name type="primary">srrA</name>
    <name type="ordered locus">SAV1492</name>
</gene>
<reference key="1">
    <citation type="journal article" date="2001" name="Lancet">
        <title>Whole genome sequencing of meticillin-resistant Staphylococcus aureus.</title>
        <authorList>
            <person name="Kuroda M."/>
            <person name="Ohta T."/>
            <person name="Uchiyama I."/>
            <person name="Baba T."/>
            <person name="Yuzawa H."/>
            <person name="Kobayashi I."/>
            <person name="Cui L."/>
            <person name="Oguchi A."/>
            <person name="Aoki K."/>
            <person name="Nagai Y."/>
            <person name="Lian J.-Q."/>
            <person name="Ito T."/>
            <person name="Kanamori M."/>
            <person name="Matsumaru H."/>
            <person name="Maruyama A."/>
            <person name="Murakami H."/>
            <person name="Hosoyama A."/>
            <person name="Mizutani-Ui Y."/>
            <person name="Takahashi N.K."/>
            <person name="Sawano T."/>
            <person name="Inoue R."/>
            <person name="Kaito C."/>
            <person name="Sekimizu K."/>
            <person name="Hirakawa H."/>
            <person name="Kuhara S."/>
            <person name="Goto S."/>
            <person name="Yabuzaki J."/>
            <person name="Kanehisa M."/>
            <person name="Yamashita A."/>
            <person name="Oshima K."/>
            <person name="Furuya K."/>
            <person name="Yoshino C."/>
            <person name="Shiba T."/>
            <person name="Hattori M."/>
            <person name="Ogasawara N."/>
            <person name="Hayashi H."/>
            <person name="Hiramatsu K."/>
        </authorList>
    </citation>
    <scope>NUCLEOTIDE SEQUENCE [LARGE SCALE GENOMIC DNA]</scope>
    <source>
        <strain>Mu50 / ATCC 700699</strain>
    </source>
</reference>
<protein>
    <recommendedName>
        <fullName>Transcriptional regulatory protein SrrA</fullName>
    </recommendedName>
    <alternativeName>
        <fullName>Staphylococcal respiratory response protein A</fullName>
    </alternativeName>
</protein>
<comment type="function">
    <text evidence="2 3">Member of the two-component regulatory system SrrA/SrrB, which is involved in the global regulation of staphylococcal virulence factors in response to environmental oxygen levels as well as biofilm formation. Also plays an essential role in host-derived nitric oxide resistance by regulating hmp/flavohemoglobin, an enzyme that detoxifies nitric oxide by converting it to nitrate (By similarity). Functions as a transcription regulator by direct binding to promoter regions of target genes (By similarity).</text>
</comment>
<comment type="subcellular location">
    <subcellularLocation>
        <location evidence="1">Cytoplasm</location>
    </subcellularLocation>
</comment>
<comment type="PTM">
    <text evidence="1">Phosphorylated by SrrB.</text>
</comment>
<accession>Q7A2R6</accession>
<name>SRRA_STAAM</name>
<feature type="chain" id="PRO_0000081249" description="Transcriptional regulatory protein SrrA">
    <location>
        <begin position="1"/>
        <end position="241"/>
    </location>
</feature>
<feature type="domain" description="Response regulatory" evidence="4">
    <location>
        <begin position="4"/>
        <end position="117"/>
    </location>
</feature>
<feature type="DNA-binding region" description="OmpR/PhoB-type" evidence="5">
    <location>
        <begin position="133"/>
        <end position="233"/>
    </location>
</feature>
<feature type="modified residue" description="4-aspartylphosphate" evidence="4">
    <location>
        <position position="53"/>
    </location>
</feature>
<keyword id="KW-0010">Activator</keyword>
<keyword id="KW-0963">Cytoplasm</keyword>
<keyword id="KW-0238">DNA-binding</keyword>
<keyword id="KW-0597">Phosphoprotein</keyword>
<keyword id="KW-0678">Repressor</keyword>
<keyword id="KW-0804">Transcription</keyword>
<keyword id="KW-0805">Transcription regulation</keyword>
<keyword id="KW-0902">Two-component regulatory system</keyword>
<evidence type="ECO:0000250" key="1"/>
<evidence type="ECO:0000250" key="2">
    <source>
        <dbReference type="UniProtKB" id="Q5HFT0"/>
    </source>
</evidence>
<evidence type="ECO:0000250" key="3">
    <source>
        <dbReference type="UniProtKB" id="Q9L524"/>
    </source>
</evidence>
<evidence type="ECO:0000255" key="4">
    <source>
        <dbReference type="PROSITE-ProRule" id="PRU00169"/>
    </source>
</evidence>
<evidence type="ECO:0000255" key="5">
    <source>
        <dbReference type="PROSITE-ProRule" id="PRU01091"/>
    </source>
</evidence>
<organism>
    <name type="scientific">Staphylococcus aureus (strain Mu50 / ATCC 700699)</name>
    <dbReference type="NCBI Taxonomy" id="158878"/>
    <lineage>
        <taxon>Bacteria</taxon>
        <taxon>Bacillati</taxon>
        <taxon>Bacillota</taxon>
        <taxon>Bacilli</taxon>
        <taxon>Bacillales</taxon>
        <taxon>Staphylococcaceae</taxon>
        <taxon>Staphylococcus</taxon>
    </lineage>
</organism>
<sequence length="241" mass="28161">MSNEILIVDDEDRIRRLLKMYLERESFEIHEASNGQEAYELAMENNYACILLDLMLPEMDGIQVATKLREHKQTPIIMLTAKGEETNRVEGFESGADDYIVKPFSPREVVLRVKALLRRTQSTTVEQSEPHARDVIEFKHLEIDNDAHRVLADNQEVNLTPKEYELLIYLAKTPNKVFDREQLLKEVWHYEFYGDLRTVDTHVKRLREKLNRVSSEAAHMIQTVWGVGYKFEVKSNDEPAK</sequence>